<evidence type="ECO:0000255" key="1">
    <source>
        <dbReference type="HAMAP-Rule" id="MF_01880"/>
    </source>
</evidence>
<keyword id="KW-0997">Cell inner membrane</keyword>
<keyword id="KW-1003">Cell membrane</keyword>
<keyword id="KW-0472">Membrane</keyword>
<keyword id="KW-0571">Peptide transport</keyword>
<keyword id="KW-0653">Protein transport</keyword>
<keyword id="KW-1185">Reference proteome</keyword>
<keyword id="KW-0812">Transmembrane</keyword>
<keyword id="KW-1133">Transmembrane helix</keyword>
<keyword id="KW-0813">Transport</keyword>
<comment type="function">
    <text evidence="1">Probable proton-dependent permease that transports dipeptides.</text>
</comment>
<comment type="subcellular location">
    <subcellularLocation>
        <location evidence="1">Cell inner membrane</location>
        <topology evidence="1">Multi-pass membrane protein</topology>
    </subcellularLocation>
</comment>
<comment type="similarity">
    <text evidence="1">Belongs to the major facilitator superfamily. Proton-dependent oligopeptide transporter (POT/PTR) (TC 2.A.17) family. DtpD subfamily.</text>
</comment>
<gene>
    <name evidence="1" type="primary">dtpD</name>
    <name type="ordered locus">ROD_07091</name>
</gene>
<name>DTPD_CITRI</name>
<feature type="chain" id="PRO_0000395294" description="Dipeptide permease D">
    <location>
        <begin position="1"/>
        <end position="493"/>
    </location>
</feature>
<feature type="transmembrane region" description="Helical" evidence="1">
    <location>
        <begin position="14"/>
        <end position="34"/>
    </location>
</feature>
<feature type="transmembrane region" description="Helical" evidence="1">
    <location>
        <begin position="49"/>
        <end position="69"/>
    </location>
</feature>
<feature type="transmembrane region" description="Helical" evidence="1">
    <location>
        <begin position="91"/>
        <end position="111"/>
    </location>
</feature>
<feature type="transmembrane region" description="Helical" evidence="1">
    <location>
        <begin position="138"/>
        <end position="158"/>
    </location>
</feature>
<feature type="transmembrane region" description="Helical" evidence="1">
    <location>
        <begin position="167"/>
        <end position="187"/>
    </location>
</feature>
<feature type="transmembrane region" description="Helical" evidence="1">
    <location>
        <begin position="212"/>
        <end position="232"/>
    </location>
</feature>
<feature type="transmembrane region" description="Helical" evidence="1">
    <location>
        <begin position="235"/>
        <end position="255"/>
    </location>
</feature>
<feature type="transmembrane region" description="Helical" evidence="1">
    <location>
        <begin position="267"/>
        <end position="287"/>
    </location>
</feature>
<feature type="transmembrane region" description="Helical" evidence="1">
    <location>
        <begin position="312"/>
        <end position="332"/>
    </location>
</feature>
<feature type="transmembrane region" description="Helical" evidence="1">
    <location>
        <begin position="344"/>
        <end position="364"/>
    </location>
</feature>
<feature type="transmembrane region" description="Helical" evidence="1">
    <location>
        <begin position="379"/>
        <end position="399"/>
    </location>
</feature>
<feature type="transmembrane region" description="Helical" evidence="1">
    <location>
        <begin position="413"/>
        <end position="433"/>
    </location>
</feature>
<feature type="transmembrane region" description="Helical" evidence="1">
    <location>
        <begin position="458"/>
        <end position="478"/>
    </location>
</feature>
<proteinExistence type="inferred from homology"/>
<accession>D2TNL4</accession>
<dbReference type="EMBL" id="FN543502">
    <property type="protein sequence ID" value="CBG87484.1"/>
    <property type="molecule type" value="Genomic_DNA"/>
</dbReference>
<dbReference type="RefSeq" id="WP_012905038.1">
    <property type="nucleotide sequence ID" value="NC_013716.1"/>
</dbReference>
<dbReference type="SMR" id="D2TNL4"/>
<dbReference type="STRING" id="637910.ROD_07091"/>
<dbReference type="KEGG" id="cro:ROD_07091"/>
<dbReference type="eggNOG" id="COG3104">
    <property type="taxonomic scope" value="Bacteria"/>
</dbReference>
<dbReference type="HOGENOM" id="CLU_004790_0_0_6"/>
<dbReference type="OrthoDB" id="9772725at2"/>
<dbReference type="Proteomes" id="UP000001889">
    <property type="component" value="Chromosome"/>
</dbReference>
<dbReference type="GO" id="GO:0005886">
    <property type="term" value="C:plasma membrane"/>
    <property type="evidence" value="ECO:0007669"/>
    <property type="project" value="UniProtKB-SubCell"/>
</dbReference>
<dbReference type="GO" id="GO:0071916">
    <property type="term" value="F:dipeptide transmembrane transporter activity"/>
    <property type="evidence" value="ECO:0007669"/>
    <property type="project" value="UniProtKB-UniRule"/>
</dbReference>
<dbReference type="GO" id="GO:0015333">
    <property type="term" value="F:peptide:proton symporter activity"/>
    <property type="evidence" value="ECO:0007669"/>
    <property type="project" value="UniProtKB-UniRule"/>
</dbReference>
<dbReference type="GO" id="GO:0015031">
    <property type="term" value="P:protein transport"/>
    <property type="evidence" value="ECO:0007669"/>
    <property type="project" value="UniProtKB-KW"/>
</dbReference>
<dbReference type="CDD" id="cd17346">
    <property type="entry name" value="MFS_DtpA_like"/>
    <property type="match status" value="1"/>
</dbReference>
<dbReference type="FunFam" id="1.20.1250.20:FF:000035">
    <property type="entry name" value="Dipeptide permease D"/>
    <property type="match status" value="1"/>
</dbReference>
<dbReference type="Gene3D" id="1.20.1250.20">
    <property type="entry name" value="MFS general substrate transporter like domains"/>
    <property type="match status" value="1"/>
</dbReference>
<dbReference type="HAMAP" id="MF_01880">
    <property type="entry name" value="PTR2_DtpD_subfam"/>
    <property type="match status" value="1"/>
</dbReference>
<dbReference type="InterPro" id="IPR023777">
    <property type="entry name" value="AA/pep_transptr_DtpD"/>
</dbReference>
<dbReference type="InterPro" id="IPR005279">
    <property type="entry name" value="Dipep/tripep_permease"/>
</dbReference>
<dbReference type="InterPro" id="IPR020846">
    <property type="entry name" value="MFS_dom"/>
</dbReference>
<dbReference type="InterPro" id="IPR036259">
    <property type="entry name" value="MFS_trans_sf"/>
</dbReference>
<dbReference type="InterPro" id="IPR050171">
    <property type="entry name" value="MFS_Transporters"/>
</dbReference>
<dbReference type="InterPro" id="IPR000109">
    <property type="entry name" value="POT_fam"/>
</dbReference>
<dbReference type="InterPro" id="IPR018456">
    <property type="entry name" value="PTR2_symporter_CS"/>
</dbReference>
<dbReference type="NCBIfam" id="NF012006">
    <property type="entry name" value="PRK15462.1"/>
    <property type="match status" value="1"/>
</dbReference>
<dbReference type="NCBIfam" id="TIGR00924">
    <property type="entry name" value="yjdL_sub1_fam"/>
    <property type="match status" value="1"/>
</dbReference>
<dbReference type="PANTHER" id="PTHR23517:SF15">
    <property type="entry name" value="PROTON-DEPENDENT OLIGOPEPTIDE FAMILY TRANSPORT PROTEIN"/>
    <property type="match status" value="1"/>
</dbReference>
<dbReference type="PANTHER" id="PTHR23517">
    <property type="entry name" value="RESISTANCE PROTEIN MDTM, PUTATIVE-RELATED-RELATED"/>
    <property type="match status" value="1"/>
</dbReference>
<dbReference type="Pfam" id="PF00854">
    <property type="entry name" value="PTR2"/>
    <property type="match status" value="1"/>
</dbReference>
<dbReference type="SUPFAM" id="SSF103473">
    <property type="entry name" value="MFS general substrate transporter"/>
    <property type="match status" value="1"/>
</dbReference>
<dbReference type="PROSITE" id="PS50850">
    <property type="entry name" value="MFS"/>
    <property type="match status" value="1"/>
</dbReference>
<dbReference type="PROSITE" id="PS01022">
    <property type="entry name" value="PTR2_1"/>
    <property type="match status" value="1"/>
</dbReference>
<dbReference type="PROSITE" id="PS01023">
    <property type="entry name" value="PTR2_2"/>
    <property type="match status" value="1"/>
</dbReference>
<reference key="1">
    <citation type="journal article" date="2010" name="J. Bacteriol.">
        <title>The Citrobacter rodentium genome sequence reveals convergent evolution with human pathogenic Escherichia coli.</title>
        <authorList>
            <person name="Petty N.K."/>
            <person name="Bulgin R."/>
            <person name="Crepin V.F."/>
            <person name="Cerdeno-Tarraga A.M."/>
            <person name="Schroeder G.N."/>
            <person name="Quail M.A."/>
            <person name="Lennard N."/>
            <person name="Corton C."/>
            <person name="Barron A."/>
            <person name="Clark L."/>
            <person name="Toribio A.L."/>
            <person name="Parkhill J."/>
            <person name="Dougan G."/>
            <person name="Frankel G."/>
            <person name="Thomson N.R."/>
        </authorList>
    </citation>
    <scope>NUCLEOTIDE SEQUENCE [LARGE SCALE GENOMIC DNA]</scope>
    <source>
        <strain>ICC168</strain>
    </source>
</reference>
<organism>
    <name type="scientific">Citrobacter rodentium (strain ICC168)</name>
    <name type="common">Citrobacter freundii biotype 4280</name>
    <dbReference type="NCBI Taxonomy" id="637910"/>
    <lineage>
        <taxon>Bacteria</taxon>
        <taxon>Pseudomonadati</taxon>
        <taxon>Pseudomonadota</taxon>
        <taxon>Gammaproteobacteria</taxon>
        <taxon>Enterobacterales</taxon>
        <taxon>Enterobacteriaceae</taxon>
        <taxon>Citrobacter</taxon>
    </lineage>
</organism>
<sequence>MKKASSQPRAIYYVVALQIWEYFSFYGMRALLILYLTNQLKYDDTHAYALFSAYCSLVYVTPILGGYLADKVLGNRMAVMLGAFLMAVGHLVLGASEIAPTFLYLSLAIIVCGYGLFKSNISCLLGELYQTEDPRRDGGFSLLYAAGNVGSIVAPIACGYVQEEYSWAMGFALAAIGMVAGLIIFLCGNRHFTHTKGVNKAALCARSFILPNWGWLLVLLTIAPLAIAVLFWQEWAVYALIVATAIGLAVLGKIYRQAENQKQRKELGLIVTLTFFSMLFWAFAQQGGSSISLYIDRFVNRHIFGYSVPTAMFQSVNAFAVMLCGVVLAWLIKESIGGNRSVRIWGKFALGLGLMSAGFSILTLSARWSAAYGHSSMPLMIAGLAVMGFAELFIDPVAMSQITRIEIPGVTGVLTGIYMLLSGAIANYLAGVIADRTSQSAFDASGAINYSINAYIDVFSEITWGALACVGLVLLIWLYQSLKFRNRPLAVGS</sequence>
<protein>
    <recommendedName>
        <fullName evidence="1">Dipeptide permease D</fullName>
    </recommendedName>
</protein>